<accession>B9K7G9</accession>
<protein>
    <recommendedName>
        <fullName evidence="1">Peptide deformylase</fullName>
        <shortName evidence="1">PDF</shortName>
        <ecNumber evidence="1">3.5.1.88</ecNumber>
    </recommendedName>
    <alternativeName>
        <fullName evidence="1">Polypeptide deformylase</fullName>
    </alternativeName>
</protein>
<name>DEF_THENN</name>
<organism>
    <name type="scientific">Thermotoga neapolitana (strain ATCC 49049 / DSM 4359 / NBRC 107923 / NS-E)</name>
    <dbReference type="NCBI Taxonomy" id="309803"/>
    <lineage>
        <taxon>Bacteria</taxon>
        <taxon>Thermotogati</taxon>
        <taxon>Thermotogota</taxon>
        <taxon>Thermotogae</taxon>
        <taxon>Thermotogales</taxon>
        <taxon>Thermotogaceae</taxon>
        <taxon>Thermotoga</taxon>
    </lineage>
</organism>
<comment type="function">
    <text evidence="1">Removes the formyl group from the N-terminal Met of newly synthesized proteins. Requires at least a dipeptide for an efficient rate of reaction. N-terminal L-methionine is a prerequisite for activity but the enzyme has broad specificity at other positions.</text>
</comment>
<comment type="catalytic activity">
    <reaction evidence="1">
        <text>N-terminal N-formyl-L-methionyl-[peptide] + H2O = N-terminal L-methionyl-[peptide] + formate</text>
        <dbReference type="Rhea" id="RHEA:24420"/>
        <dbReference type="Rhea" id="RHEA-COMP:10639"/>
        <dbReference type="Rhea" id="RHEA-COMP:10640"/>
        <dbReference type="ChEBI" id="CHEBI:15377"/>
        <dbReference type="ChEBI" id="CHEBI:15740"/>
        <dbReference type="ChEBI" id="CHEBI:49298"/>
        <dbReference type="ChEBI" id="CHEBI:64731"/>
        <dbReference type="EC" id="3.5.1.88"/>
    </reaction>
</comment>
<comment type="cofactor">
    <cofactor evidence="1">
        <name>Fe(2+)</name>
        <dbReference type="ChEBI" id="CHEBI:29033"/>
    </cofactor>
    <text evidence="1">Binds 1 Fe(2+) ion.</text>
</comment>
<comment type="similarity">
    <text evidence="1">Belongs to the polypeptide deformylase family.</text>
</comment>
<proteinExistence type="inferred from homology"/>
<evidence type="ECO:0000255" key="1">
    <source>
        <dbReference type="HAMAP-Rule" id="MF_00163"/>
    </source>
</evidence>
<keyword id="KW-0378">Hydrolase</keyword>
<keyword id="KW-0408">Iron</keyword>
<keyword id="KW-0479">Metal-binding</keyword>
<keyword id="KW-0648">Protein biosynthesis</keyword>
<dbReference type="EC" id="3.5.1.88" evidence="1"/>
<dbReference type="EMBL" id="CP000916">
    <property type="protein sequence ID" value="ACM22902.1"/>
    <property type="molecule type" value="Genomic_DNA"/>
</dbReference>
<dbReference type="RefSeq" id="WP_015919221.1">
    <property type="nucleotide sequence ID" value="NC_011978.1"/>
</dbReference>
<dbReference type="SMR" id="B9K7G9"/>
<dbReference type="STRING" id="309803.CTN_0726"/>
<dbReference type="KEGG" id="tna:CTN_0726"/>
<dbReference type="eggNOG" id="COG0242">
    <property type="taxonomic scope" value="Bacteria"/>
</dbReference>
<dbReference type="HOGENOM" id="CLU_061901_4_2_0"/>
<dbReference type="Proteomes" id="UP000000445">
    <property type="component" value="Chromosome"/>
</dbReference>
<dbReference type="GO" id="GO:0046872">
    <property type="term" value="F:metal ion binding"/>
    <property type="evidence" value="ECO:0007669"/>
    <property type="project" value="UniProtKB-KW"/>
</dbReference>
<dbReference type="GO" id="GO:0042586">
    <property type="term" value="F:peptide deformylase activity"/>
    <property type="evidence" value="ECO:0007669"/>
    <property type="project" value="UniProtKB-UniRule"/>
</dbReference>
<dbReference type="GO" id="GO:0043686">
    <property type="term" value="P:co-translational protein modification"/>
    <property type="evidence" value="ECO:0007669"/>
    <property type="project" value="TreeGrafter"/>
</dbReference>
<dbReference type="GO" id="GO:0006412">
    <property type="term" value="P:translation"/>
    <property type="evidence" value="ECO:0007669"/>
    <property type="project" value="UniProtKB-UniRule"/>
</dbReference>
<dbReference type="CDD" id="cd00487">
    <property type="entry name" value="Pep_deformylase"/>
    <property type="match status" value="1"/>
</dbReference>
<dbReference type="FunFam" id="3.90.45.10:FF:000013">
    <property type="entry name" value="Peptide deformylase"/>
    <property type="match status" value="1"/>
</dbReference>
<dbReference type="Gene3D" id="3.90.45.10">
    <property type="entry name" value="Peptide deformylase"/>
    <property type="match status" value="1"/>
</dbReference>
<dbReference type="HAMAP" id="MF_00163">
    <property type="entry name" value="Pep_deformylase"/>
    <property type="match status" value="1"/>
</dbReference>
<dbReference type="InterPro" id="IPR023635">
    <property type="entry name" value="Peptide_deformylase"/>
</dbReference>
<dbReference type="InterPro" id="IPR036821">
    <property type="entry name" value="Peptide_deformylase_sf"/>
</dbReference>
<dbReference type="NCBIfam" id="TIGR00079">
    <property type="entry name" value="pept_deformyl"/>
    <property type="match status" value="1"/>
</dbReference>
<dbReference type="NCBIfam" id="NF001159">
    <property type="entry name" value="PRK00150.1-3"/>
    <property type="match status" value="1"/>
</dbReference>
<dbReference type="PANTHER" id="PTHR10458">
    <property type="entry name" value="PEPTIDE DEFORMYLASE"/>
    <property type="match status" value="1"/>
</dbReference>
<dbReference type="PANTHER" id="PTHR10458:SF22">
    <property type="entry name" value="PEPTIDE DEFORMYLASE"/>
    <property type="match status" value="1"/>
</dbReference>
<dbReference type="Pfam" id="PF01327">
    <property type="entry name" value="Pep_deformylase"/>
    <property type="match status" value="1"/>
</dbReference>
<dbReference type="PIRSF" id="PIRSF004749">
    <property type="entry name" value="Pep_def"/>
    <property type="match status" value="1"/>
</dbReference>
<dbReference type="PRINTS" id="PR01576">
    <property type="entry name" value="PDEFORMYLASE"/>
</dbReference>
<dbReference type="SUPFAM" id="SSF56420">
    <property type="entry name" value="Peptide deformylase"/>
    <property type="match status" value="1"/>
</dbReference>
<feature type="chain" id="PRO_1000200754" description="Peptide deformylase">
    <location>
        <begin position="1"/>
        <end position="164"/>
    </location>
</feature>
<feature type="active site" evidence="1">
    <location>
        <position position="130"/>
    </location>
</feature>
<feature type="binding site" evidence="1">
    <location>
        <position position="87"/>
    </location>
    <ligand>
        <name>Fe cation</name>
        <dbReference type="ChEBI" id="CHEBI:24875"/>
    </ligand>
</feature>
<feature type="binding site" evidence="1">
    <location>
        <position position="129"/>
    </location>
    <ligand>
        <name>Fe cation</name>
        <dbReference type="ChEBI" id="CHEBI:24875"/>
    </ligand>
</feature>
<feature type="binding site" evidence="1">
    <location>
        <position position="133"/>
    </location>
    <ligand>
        <name>Fe cation</name>
        <dbReference type="ChEBI" id="CHEBI:24875"/>
    </ligand>
</feature>
<gene>
    <name evidence="1" type="primary">def</name>
    <name type="ordered locus">CTN_0726</name>
</gene>
<sequence length="164" mass="18889">MYRVRVFGDPVLRKRAKPVTKFDEALKRTIERMIETMYHYDGVGLAAPQVGISQRFFVMDVGNGPVAVINPEILEASPETEIAEEGCLSFPEIFVEIERSKRVKVRYQNVRGEFVEEELEGYPARVFQHEFDHLNGVLIIDRIKPAKRLLLRKRLMDIAKSARG</sequence>
<reference key="1">
    <citation type="submission" date="2007-11" db="EMBL/GenBank/DDBJ databases">
        <title>The genome sequence of the hyperthermophilic bacterium Thermotoga neapolitana.</title>
        <authorList>
            <person name="Lim S.K."/>
            <person name="Kim J.S."/>
            <person name="Cha S.H."/>
            <person name="Park B.C."/>
            <person name="Lee D.S."/>
            <person name="Tae H.S."/>
            <person name="Kim S.-J."/>
            <person name="Kim J.J."/>
            <person name="Park K.J."/>
            <person name="Lee S.Y."/>
        </authorList>
    </citation>
    <scope>NUCLEOTIDE SEQUENCE [LARGE SCALE GENOMIC DNA]</scope>
    <source>
        <strain>ATCC 49049 / DSM 4359 / NBRC 107923 / NS-E</strain>
    </source>
</reference>